<proteinExistence type="inferred from homology"/>
<accession>Q63Y06</accession>
<organism>
    <name type="scientific">Burkholderia pseudomallei (strain K96243)</name>
    <dbReference type="NCBI Taxonomy" id="272560"/>
    <lineage>
        <taxon>Bacteria</taxon>
        <taxon>Pseudomonadati</taxon>
        <taxon>Pseudomonadota</taxon>
        <taxon>Betaproteobacteria</taxon>
        <taxon>Burkholderiales</taxon>
        <taxon>Burkholderiaceae</taxon>
        <taxon>Burkholderia</taxon>
        <taxon>pseudomallei group</taxon>
    </lineage>
</organism>
<evidence type="ECO:0000255" key="1">
    <source>
        <dbReference type="HAMAP-Rule" id="MF_00123"/>
    </source>
</evidence>
<protein>
    <recommendedName>
        <fullName evidence="1">Arginine--tRNA ligase</fullName>
        <ecNumber evidence="1">6.1.1.19</ecNumber>
    </recommendedName>
    <alternativeName>
        <fullName evidence="1">Arginyl-tRNA synthetase</fullName>
        <shortName evidence="1">ArgRS</shortName>
    </alternativeName>
</protein>
<reference key="1">
    <citation type="journal article" date="2004" name="Proc. Natl. Acad. Sci. U.S.A.">
        <title>Genomic plasticity of the causative agent of melioidosis, Burkholderia pseudomallei.</title>
        <authorList>
            <person name="Holden M.T.G."/>
            <person name="Titball R.W."/>
            <person name="Peacock S.J."/>
            <person name="Cerdeno-Tarraga A.-M."/>
            <person name="Atkins T."/>
            <person name="Crossman L.C."/>
            <person name="Pitt T."/>
            <person name="Churcher C."/>
            <person name="Mungall K.L."/>
            <person name="Bentley S.D."/>
            <person name="Sebaihia M."/>
            <person name="Thomson N.R."/>
            <person name="Bason N."/>
            <person name="Beacham I.R."/>
            <person name="Brooks K."/>
            <person name="Brown K.A."/>
            <person name="Brown N.F."/>
            <person name="Challis G.L."/>
            <person name="Cherevach I."/>
            <person name="Chillingworth T."/>
            <person name="Cronin A."/>
            <person name="Crossett B."/>
            <person name="Davis P."/>
            <person name="DeShazer D."/>
            <person name="Feltwell T."/>
            <person name="Fraser A."/>
            <person name="Hance Z."/>
            <person name="Hauser H."/>
            <person name="Holroyd S."/>
            <person name="Jagels K."/>
            <person name="Keith K.E."/>
            <person name="Maddison M."/>
            <person name="Moule S."/>
            <person name="Price C."/>
            <person name="Quail M.A."/>
            <person name="Rabbinowitsch E."/>
            <person name="Rutherford K."/>
            <person name="Sanders M."/>
            <person name="Simmonds M."/>
            <person name="Songsivilai S."/>
            <person name="Stevens K."/>
            <person name="Tumapa S."/>
            <person name="Vesaratchavest M."/>
            <person name="Whitehead S."/>
            <person name="Yeats C."/>
            <person name="Barrell B.G."/>
            <person name="Oyston P.C.F."/>
            <person name="Parkhill J."/>
        </authorList>
    </citation>
    <scope>NUCLEOTIDE SEQUENCE [LARGE SCALE GENOMIC DNA]</scope>
    <source>
        <strain>K96243</strain>
    </source>
</reference>
<dbReference type="EC" id="6.1.1.19" evidence="1"/>
<dbReference type="EMBL" id="BX571965">
    <property type="protein sequence ID" value="CAH34371.1"/>
    <property type="molecule type" value="Genomic_DNA"/>
</dbReference>
<dbReference type="RefSeq" id="WP_004522947.1">
    <property type="nucleotide sequence ID" value="NZ_CP009538.1"/>
</dbReference>
<dbReference type="RefSeq" id="YP_107009.1">
    <property type="nucleotide sequence ID" value="NC_006350.1"/>
</dbReference>
<dbReference type="SMR" id="Q63Y06"/>
<dbReference type="STRING" id="272560.BPSL0383"/>
<dbReference type="KEGG" id="bps:BPSL0383"/>
<dbReference type="PATRIC" id="fig|272560.51.peg.1284"/>
<dbReference type="eggNOG" id="COG0018">
    <property type="taxonomic scope" value="Bacteria"/>
</dbReference>
<dbReference type="Proteomes" id="UP000000605">
    <property type="component" value="Chromosome 1"/>
</dbReference>
<dbReference type="GO" id="GO:0005737">
    <property type="term" value="C:cytoplasm"/>
    <property type="evidence" value="ECO:0007669"/>
    <property type="project" value="UniProtKB-SubCell"/>
</dbReference>
<dbReference type="GO" id="GO:0004814">
    <property type="term" value="F:arginine-tRNA ligase activity"/>
    <property type="evidence" value="ECO:0007669"/>
    <property type="project" value="UniProtKB-UniRule"/>
</dbReference>
<dbReference type="GO" id="GO:0005524">
    <property type="term" value="F:ATP binding"/>
    <property type="evidence" value="ECO:0007669"/>
    <property type="project" value="UniProtKB-UniRule"/>
</dbReference>
<dbReference type="GO" id="GO:0006420">
    <property type="term" value="P:arginyl-tRNA aminoacylation"/>
    <property type="evidence" value="ECO:0007669"/>
    <property type="project" value="UniProtKB-UniRule"/>
</dbReference>
<dbReference type="CDD" id="cd07956">
    <property type="entry name" value="Anticodon_Ia_Arg"/>
    <property type="match status" value="1"/>
</dbReference>
<dbReference type="CDD" id="cd00671">
    <property type="entry name" value="ArgRS_core"/>
    <property type="match status" value="1"/>
</dbReference>
<dbReference type="FunFam" id="1.10.730.10:FF:000008">
    <property type="entry name" value="Arginine--tRNA ligase"/>
    <property type="match status" value="1"/>
</dbReference>
<dbReference type="FunFam" id="3.40.50.620:FF:000062">
    <property type="entry name" value="Arginine--tRNA ligase"/>
    <property type="match status" value="1"/>
</dbReference>
<dbReference type="Gene3D" id="3.30.1360.70">
    <property type="entry name" value="Arginyl tRNA synthetase N-terminal domain"/>
    <property type="match status" value="1"/>
</dbReference>
<dbReference type="Gene3D" id="3.40.50.620">
    <property type="entry name" value="HUPs"/>
    <property type="match status" value="1"/>
</dbReference>
<dbReference type="Gene3D" id="1.10.730.10">
    <property type="entry name" value="Isoleucyl-tRNA Synthetase, Domain 1"/>
    <property type="match status" value="1"/>
</dbReference>
<dbReference type="HAMAP" id="MF_00123">
    <property type="entry name" value="Arg_tRNA_synth"/>
    <property type="match status" value="1"/>
</dbReference>
<dbReference type="InterPro" id="IPR001412">
    <property type="entry name" value="aa-tRNA-synth_I_CS"/>
</dbReference>
<dbReference type="InterPro" id="IPR001278">
    <property type="entry name" value="Arg-tRNA-ligase"/>
</dbReference>
<dbReference type="InterPro" id="IPR005148">
    <property type="entry name" value="Arg-tRNA-synth_N"/>
</dbReference>
<dbReference type="InterPro" id="IPR036695">
    <property type="entry name" value="Arg-tRNA-synth_N_sf"/>
</dbReference>
<dbReference type="InterPro" id="IPR035684">
    <property type="entry name" value="ArgRS_core"/>
</dbReference>
<dbReference type="InterPro" id="IPR008909">
    <property type="entry name" value="DALR_anticod-bd"/>
</dbReference>
<dbReference type="InterPro" id="IPR014729">
    <property type="entry name" value="Rossmann-like_a/b/a_fold"/>
</dbReference>
<dbReference type="InterPro" id="IPR009080">
    <property type="entry name" value="tRNAsynth_Ia_anticodon-bd"/>
</dbReference>
<dbReference type="NCBIfam" id="TIGR00456">
    <property type="entry name" value="argS"/>
    <property type="match status" value="1"/>
</dbReference>
<dbReference type="PANTHER" id="PTHR11956:SF5">
    <property type="entry name" value="ARGININE--TRNA LIGASE, CYTOPLASMIC"/>
    <property type="match status" value="1"/>
</dbReference>
<dbReference type="PANTHER" id="PTHR11956">
    <property type="entry name" value="ARGINYL-TRNA SYNTHETASE"/>
    <property type="match status" value="1"/>
</dbReference>
<dbReference type="Pfam" id="PF03485">
    <property type="entry name" value="Arg_tRNA_synt_N"/>
    <property type="match status" value="1"/>
</dbReference>
<dbReference type="Pfam" id="PF05746">
    <property type="entry name" value="DALR_1"/>
    <property type="match status" value="1"/>
</dbReference>
<dbReference type="Pfam" id="PF00750">
    <property type="entry name" value="tRNA-synt_1d"/>
    <property type="match status" value="1"/>
</dbReference>
<dbReference type="PRINTS" id="PR01038">
    <property type="entry name" value="TRNASYNTHARG"/>
</dbReference>
<dbReference type="SMART" id="SM01016">
    <property type="entry name" value="Arg_tRNA_synt_N"/>
    <property type="match status" value="1"/>
</dbReference>
<dbReference type="SMART" id="SM00836">
    <property type="entry name" value="DALR_1"/>
    <property type="match status" value="1"/>
</dbReference>
<dbReference type="SUPFAM" id="SSF47323">
    <property type="entry name" value="Anticodon-binding domain of a subclass of class I aminoacyl-tRNA synthetases"/>
    <property type="match status" value="1"/>
</dbReference>
<dbReference type="SUPFAM" id="SSF55190">
    <property type="entry name" value="Arginyl-tRNA synthetase (ArgRS), N-terminal 'additional' domain"/>
    <property type="match status" value="1"/>
</dbReference>
<dbReference type="SUPFAM" id="SSF52374">
    <property type="entry name" value="Nucleotidylyl transferase"/>
    <property type="match status" value="1"/>
</dbReference>
<dbReference type="PROSITE" id="PS00178">
    <property type="entry name" value="AA_TRNA_LIGASE_I"/>
    <property type="match status" value="1"/>
</dbReference>
<feature type="chain" id="PRO_0000241997" description="Arginine--tRNA ligase">
    <location>
        <begin position="1"/>
        <end position="594"/>
    </location>
</feature>
<feature type="short sequence motif" description="'HIGH' region">
    <location>
        <begin position="139"/>
        <end position="149"/>
    </location>
</feature>
<comment type="catalytic activity">
    <reaction evidence="1">
        <text>tRNA(Arg) + L-arginine + ATP = L-arginyl-tRNA(Arg) + AMP + diphosphate</text>
        <dbReference type="Rhea" id="RHEA:20301"/>
        <dbReference type="Rhea" id="RHEA-COMP:9658"/>
        <dbReference type="Rhea" id="RHEA-COMP:9673"/>
        <dbReference type="ChEBI" id="CHEBI:30616"/>
        <dbReference type="ChEBI" id="CHEBI:32682"/>
        <dbReference type="ChEBI" id="CHEBI:33019"/>
        <dbReference type="ChEBI" id="CHEBI:78442"/>
        <dbReference type="ChEBI" id="CHEBI:78513"/>
        <dbReference type="ChEBI" id="CHEBI:456215"/>
        <dbReference type="EC" id="6.1.1.19"/>
    </reaction>
</comment>
<comment type="subunit">
    <text evidence="1">Monomer.</text>
</comment>
<comment type="subcellular location">
    <subcellularLocation>
        <location evidence="1">Cytoplasm</location>
    </subcellularLocation>
</comment>
<comment type="similarity">
    <text evidence="1">Belongs to the class-I aminoacyl-tRNA synthetase family.</text>
</comment>
<gene>
    <name evidence="1" type="primary">argS</name>
    <name type="ordered locus">BPSL0383</name>
</gene>
<sequence length="594" mass="64520">MLPAQKHTLETLLENSVKQVVQASKGDADAAFVLPAIALERPKVAAHGDVACNVALQLAKPLGANPRQLAEQIVAALTAQPEAAGLVDAAEIAGPGFINLRLTPASKQAVIGAVLAQGRAFGASERDHGKRVLLEFVSANPTGPLHVGHGRQAALGDALANVLASQGYAVHREFYYNDAGVQIGNLAISTQARARGLKPGDAGWPEAAYNGEYIADIARDYLNGETVAASDGEPVTGKRDVEDLEAIRKFAVTYLRREQDMDLKAFGVKFDQYYLESSLYTEGRVEKTVDALIAAGMTYEQEGALWLRTTDEGDDKDRVMRKTDGTYTYFVPDVAYHVTKWERGFTKVINIQGSDHHGTIARVRAGLQGLHIGIPKGYPDYVLHKMVTVMRDGQEVKISKRAGSYVTVRDLIEWSGGATPGSEGSPELLDEATITRGRDAVRFFLISRKADTEFVFDIDLALKQNDENPVYYVQYAHARICSVINEWKSRYGATDALLPGADLSPLDSKQAMALMQKLAEYPDVLAHAAGELAPHAVAFYLRELASEFHSFYNAERVLVDEQAPRTARVALLAATRQVLENGLAMLGVSAPSKM</sequence>
<name>SYR_BURPS</name>
<keyword id="KW-0030">Aminoacyl-tRNA synthetase</keyword>
<keyword id="KW-0067">ATP-binding</keyword>
<keyword id="KW-0963">Cytoplasm</keyword>
<keyword id="KW-0436">Ligase</keyword>
<keyword id="KW-0547">Nucleotide-binding</keyword>
<keyword id="KW-0648">Protein biosynthesis</keyword>
<keyword id="KW-1185">Reference proteome</keyword>